<keyword id="KW-0687">Ribonucleoprotein</keyword>
<keyword id="KW-0689">Ribosomal protein</keyword>
<accession>C4KIJ0</accession>
<feature type="chain" id="PRO_1000205977" description="Large ribosomal subunit protein eL31">
    <location>
        <begin position="1"/>
        <end position="88"/>
    </location>
</feature>
<protein>
    <recommendedName>
        <fullName evidence="1">Large ribosomal subunit protein eL31</fullName>
    </recommendedName>
    <alternativeName>
        <fullName evidence="2">50S ribosomal protein L31e</fullName>
    </alternativeName>
</protein>
<reference key="1">
    <citation type="journal article" date="2009" name="Proc. Natl. Acad. Sci. U.S.A.">
        <title>Biogeography of the Sulfolobus islandicus pan-genome.</title>
        <authorList>
            <person name="Reno M.L."/>
            <person name="Held N.L."/>
            <person name="Fields C.J."/>
            <person name="Burke P.V."/>
            <person name="Whitaker R.J."/>
        </authorList>
    </citation>
    <scope>NUCLEOTIDE SEQUENCE [LARGE SCALE GENOMIC DNA]</scope>
    <source>
        <strain>M.16.4 / Kamchatka #3</strain>
    </source>
</reference>
<organism>
    <name type="scientific">Saccharolobus islandicus (strain M.16.4 / Kamchatka #3)</name>
    <name type="common">Sulfolobus islandicus</name>
    <dbReference type="NCBI Taxonomy" id="426118"/>
    <lineage>
        <taxon>Archaea</taxon>
        <taxon>Thermoproteota</taxon>
        <taxon>Thermoprotei</taxon>
        <taxon>Sulfolobales</taxon>
        <taxon>Sulfolobaceae</taxon>
        <taxon>Saccharolobus</taxon>
    </lineage>
</organism>
<dbReference type="EMBL" id="CP001402">
    <property type="protein sequence ID" value="ACR42404.1"/>
    <property type="molecule type" value="Genomic_DNA"/>
</dbReference>
<dbReference type="RefSeq" id="WP_012711730.1">
    <property type="nucleotide sequence ID" value="NC_012726.1"/>
</dbReference>
<dbReference type="SMR" id="C4KIJ0"/>
<dbReference type="KEGG" id="sid:M164_1801"/>
<dbReference type="HOGENOM" id="CLU_2461923_0_0_2"/>
<dbReference type="Proteomes" id="UP000001479">
    <property type="component" value="Chromosome"/>
</dbReference>
<dbReference type="GO" id="GO:1990904">
    <property type="term" value="C:ribonucleoprotein complex"/>
    <property type="evidence" value="ECO:0007669"/>
    <property type="project" value="UniProtKB-KW"/>
</dbReference>
<dbReference type="GO" id="GO:0005840">
    <property type="term" value="C:ribosome"/>
    <property type="evidence" value="ECO:0007669"/>
    <property type="project" value="UniProtKB-KW"/>
</dbReference>
<dbReference type="GO" id="GO:0003735">
    <property type="term" value="F:structural constituent of ribosome"/>
    <property type="evidence" value="ECO:0007669"/>
    <property type="project" value="InterPro"/>
</dbReference>
<dbReference type="GO" id="GO:0006412">
    <property type="term" value="P:translation"/>
    <property type="evidence" value="ECO:0007669"/>
    <property type="project" value="UniProtKB-UniRule"/>
</dbReference>
<dbReference type="Gene3D" id="3.10.440.10">
    <property type="match status" value="1"/>
</dbReference>
<dbReference type="HAMAP" id="MF_00410">
    <property type="entry name" value="Ribosomal_eL31"/>
    <property type="match status" value="1"/>
</dbReference>
<dbReference type="InterPro" id="IPR000054">
    <property type="entry name" value="Ribosomal_eL31"/>
</dbReference>
<dbReference type="InterPro" id="IPR023621">
    <property type="entry name" value="Ribosomal_eL31_dom_sf"/>
</dbReference>
<dbReference type="NCBIfam" id="NF002258">
    <property type="entry name" value="PRK01192.1-1"/>
    <property type="match status" value="1"/>
</dbReference>
<dbReference type="Pfam" id="PF01198">
    <property type="entry name" value="Ribosomal_L31e"/>
    <property type="match status" value="1"/>
</dbReference>
<dbReference type="SMART" id="SM01380">
    <property type="entry name" value="Ribosomal_L31e"/>
    <property type="match status" value="1"/>
</dbReference>
<dbReference type="SUPFAM" id="SSF54575">
    <property type="entry name" value="Ribosomal protein L31e"/>
    <property type="match status" value="1"/>
</dbReference>
<sequence>MKEKDNFEMVINLRKIKTGKRTGRSKRAVKFVRKIVARHFNADKVVIDPLLAKSISKNGNDKVVSKVRVVVSKVGEKIYLVRLAIKSR</sequence>
<name>RL31_SACI6</name>
<evidence type="ECO:0000255" key="1">
    <source>
        <dbReference type="HAMAP-Rule" id="MF_00410"/>
    </source>
</evidence>
<evidence type="ECO:0000305" key="2"/>
<gene>
    <name evidence="1" type="primary">rpl31e</name>
    <name type="ordered locus">M164_1801</name>
</gene>
<proteinExistence type="inferred from homology"/>
<comment type="similarity">
    <text evidence="1">Belongs to the eukaryotic ribosomal protein eL31 family.</text>
</comment>